<organism>
    <name type="scientific">Shewanella sp. (strain MR-4)</name>
    <dbReference type="NCBI Taxonomy" id="60480"/>
    <lineage>
        <taxon>Bacteria</taxon>
        <taxon>Pseudomonadati</taxon>
        <taxon>Pseudomonadota</taxon>
        <taxon>Gammaproteobacteria</taxon>
        <taxon>Alteromonadales</taxon>
        <taxon>Shewanellaceae</taxon>
        <taxon>Shewanella</taxon>
    </lineage>
</organism>
<proteinExistence type="inferred from homology"/>
<protein>
    <recommendedName>
        <fullName evidence="1">ATP-dependent protease ATPase subunit HslU</fullName>
    </recommendedName>
    <alternativeName>
        <fullName evidence="1">Unfoldase HslU</fullName>
    </alternativeName>
</protein>
<name>HSLU_SHESM</name>
<gene>
    <name evidence="1" type="primary">hslU</name>
    <name type="ordered locus">Shewmr4_3522</name>
</gene>
<reference key="1">
    <citation type="submission" date="2006-08" db="EMBL/GenBank/DDBJ databases">
        <title>Complete sequence of Shewanella sp. MR-4.</title>
        <authorList>
            <consortium name="US DOE Joint Genome Institute"/>
            <person name="Copeland A."/>
            <person name="Lucas S."/>
            <person name="Lapidus A."/>
            <person name="Barry K."/>
            <person name="Detter J.C."/>
            <person name="Glavina del Rio T."/>
            <person name="Hammon N."/>
            <person name="Israni S."/>
            <person name="Dalin E."/>
            <person name="Tice H."/>
            <person name="Pitluck S."/>
            <person name="Kiss H."/>
            <person name="Brettin T."/>
            <person name="Bruce D."/>
            <person name="Han C."/>
            <person name="Tapia R."/>
            <person name="Gilna P."/>
            <person name="Schmutz J."/>
            <person name="Larimer F."/>
            <person name="Land M."/>
            <person name="Hauser L."/>
            <person name="Kyrpides N."/>
            <person name="Mikhailova N."/>
            <person name="Nealson K."/>
            <person name="Konstantinidis K."/>
            <person name="Klappenbach J."/>
            <person name="Tiedje J."/>
            <person name="Richardson P."/>
        </authorList>
    </citation>
    <scope>NUCLEOTIDE SEQUENCE [LARGE SCALE GENOMIC DNA]</scope>
    <source>
        <strain>MR-4</strain>
    </source>
</reference>
<keyword id="KW-0067">ATP-binding</keyword>
<keyword id="KW-0143">Chaperone</keyword>
<keyword id="KW-0963">Cytoplasm</keyword>
<keyword id="KW-0547">Nucleotide-binding</keyword>
<keyword id="KW-0346">Stress response</keyword>
<evidence type="ECO:0000255" key="1">
    <source>
        <dbReference type="HAMAP-Rule" id="MF_00249"/>
    </source>
</evidence>
<evidence type="ECO:0000256" key="2">
    <source>
        <dbReference type="SAM" id="MobiDB-lite"/>
    </source>
</evidence>
<dbReference type="EMBL" id="CP000446">
    <property type="protein sequence ID" value="ABI40587.1"/>
    <property type="molecule type" value="Genomic_DNA"/>
</dbReference>
<dbReference type="RefSeq" id="WP_011624251.1">
    <property type="nucleotide sequence ID" value="NC_008321.1"/>
</dbReference>
<dbReference type="SMR" id="Q0HED0"/>
<dbReference type="KEGG" id="she:Shewmr4_3522"/>
<dbReference type="HOGENOM" id="CLU_033123_0_0_6"/>
<dbReference type="GO" id="GO:0009376">
    <property type="term" value="C:HslUV protease complex"/>
    <property type="evidence" value="ECO:0007669"/>
    <property type="project" value="UniProtKB-UniRule"/>
</dbReference>
<dbReference type="GO" id="GO:0005524">
    <property type="term" value="F:ATP binding"/>
    <property type="evidence" value="ECO:0007669"/>
    <property type="project" value="UniProtKB-UniRule"/>
</dbReference>
<dbReference type="GO" id="GO:0016887">
    <property type="term" value="F:ATP hydrolysis activity"/>
    <property type="evidence" value="ECO:0007669"/>
    <property type="project" value="InterPro"/>
</dbReference>
<dbReference type="GO" id="GO:0008233">
    <property type="term" value="F:peptidase activity"/>
    <property type="evidence" value="ECO:0007669"/>
    <property type="project" value="InterPro"/>
</dbReference>
<dbReference type="GO" id="GO:0036402">
    <property type="term" value="F:proteasome-activating activity"/>
    <property type="evidence" value="ECO:0007669"/>
    <property type="project" value="UniProtKB-UniRule"/>
</dbReference>
<dbReference type="GO" id="GO:0043335">
    <property type="term" value="P:protein unfolding"/>
    <property type="evidence" value="ECO:0007669"/>
    <property type="project" value="UniProtKB-UniRule"/>
</dbReference>
<dbReference type="GO" id="GO:0051603">
    <property type="term" value="P:proteolysis involved in protein catabolic process"/>
    <property type="evidence" value="ECO:0007669"/>
    <property type="project" value="TreeGrafter"/>
</dbReference>
<dbReference type="CDD" id="cd19498">
    <property type="entry name" value="RecA-like_HslU"/>
    <property type="match status" value="1"/>
</dbReference>
<dbReference type="FunFam" id="1.10.8.10:FF:000028">
    <property type="entry name" value="ATP-dependent protease ATPase subunit HslU"/>
    <property type="match status" value="1"/>
</dbReference>
<dbReference type="FunFam" id="1.10.8.60:FF:000027">
    <property type="entry name" value="ATP-dependent protease ATPase subunit HslU"/>
    <property type="match status" value="1"/>
</dbReference>
<dbReference type="FunFam" id="3.40.50.300:FF:000213">
    <property type="entry name" value="ATP-dependent protease ATPase subunit HslU"/>
    <property type="match status" value="1"/>
</dbReference>
<dbReference type="FunFam" id="3.40.50.300:FF:000220">
    <property type="entry name" value="ATP-dependent protease ATPase subunit HslU"/>
    <property type="match status" value="1"/>
</dbReference>
<dbReference type="Gene3D" id="1.10.8.60">
    <property type="match status" value="1"/>
</dbReference>
<dbReference type="Gene3D" id="1.10.8.10">
    <property type="entry name" value="DNA helicase RuvA subunit, C-terminal domain"/>
    <property type="match status" value="1"/>
</dbReference>
<dbReference type="Gene3D" id="3.40.50.300">
    <property type="entry name" value="P-loop containing nucleotide triphosphate hydrolases"/>
    <property type="match status" value="2"/>
</dbReference>
<dbReference type="HAMAP" id="MF_00249">
    <property type="entry name" value="HslU"/>
    <property type="match status" value="1"/>
</dbReference>
<dbReference type="InterPro" id="IPR003593">
    <property type="entry name" value="AAA+_ATPase"/>
</dbReference>
<dbReference type="InterPro" id="IPR050052">
    <property type="entry name" value="ATP-dep_Clp_protease_ClpX"/>
</dbReference>
<dbReference type="InterPro" id="IPR003959">
    <property type="entry name" value="ATPase_AAA_core"/>
</dbReference>
<dbReference type="InterPro" id="IPR019489">
    <property type="entry name" value="Clp_ATPase_C"/>
</dbReference>
<dbReference type="InterPro" id="IPR004491">
    <property type="entry name" value="HslU"/>
</dbReference>
<dbReference type="InterPro" id="IPR027417">
    <property type="entry name" value="P-loop_NTPase"/>
</dbReference>
<dbReference type="NCBIfam" id="TIGR00390">
    <property type="entry name" value="hslU"/>
    <property type="match status" value="1"/>
</dbReference>
<dbReference type="NCBIfam" id="NF003544">
    <property type="entry name" value="PRK05201.1"/>
    <property type="match status" value="1"/>
</dbReference>
<dbReference type="PANTHER" id="PTHR48102">
    <property type="entry name" value="ATP-DEPENDENT CLP PROTEASE ATP-BINDING SUBUNIT CLPX-LIKE, MITOCHONDRIAL-RELATED"/>
    <property type="match status" value="1"/>
</dbReference>
<dbReference type="PANTHER" id="PTHR48102:SF3">
    <property type="entry name" value="ATP-DEPENDENT PROTEASE ATPASE SUBUNIT HSLU"/>
    <property type="match status" value="1"/>
</dbReference>
<dbReference type="Pfam" id="PF00004">
    <property type="entry name" value="AAA"/>
    <property type="match status" value="1"/>
</dbReference>
<dbReference type="Pfam" id="PF07724">
    <property type="entry name" value="AAA_2"/>
    <property type="match status" value="1"/>
</dbReference>
<dbReference type="SMART" id="SM00382">
    <property type="entry name" value="AAA"/>
    <property type="match status" value="1"/>
</dbReference>
<dbReference type="SMART" id="SM01086">
    <property type="entry name" value="ClpB_D2-small"/>
    <property type="match status" value="1"/>
</dbReference>
<dbReference type="SUPFAM" id="SSF52540">
    <property type="entry name" value="P-loop containing nucleoside triphosphate hydrolases"/>
    <property type="match status" value="1"/>
</dbReference>
<comment type="function">
    <text evidence="1">ATPase subunit of a proteasome-like degradation complex; this subunit has chaperone activity. The binding of ATP and its subsequent hydrolysis by HslU are essential for unfolding of protein substrates subsequently hydrolyzed by HslV. HslU recognizes the N-terminal part of its protein substrates and unfolds these before they are guided to HslV for hydrolysis.</text>
</comment>
<comment type="subunit">
    <text evidence="1">A double ring-shaped homohexamer of HslV is capped on each side by a ring-shaped HslU homohexamer. The assembly of the HslU/HslV complex is dependent on binding of ATP.</text>
</comment>
<comment type="subcellular location">
    <subcellularLocation>
        <location evidence="1">Cytoplasm</location>
    </subcellularLocation>
</comment>
<comment type="similarity">
    <text evidence="1">Belongs to the ClpX chaperone family. HslU subfamily.</text>
</comment>
<sequence>MSEMTPREIVHELDAHIIGQKKAKRSVAVALRNRWRRMQLDADFRQEVTPKNILMIGPTGVGKTEIARRLAKLANAPFIKVEATKFTEVGYVGKEVEQIIRDLTDIAIKLTREQQMGKCRQRAEEHAEERILDALLPKPKNDWDNTDSDTSSNTRQIFRKKLREGQLDDKEIDIDVAQPQVGIEIMSPPGMEEMTNQLQSLFKNMGQAPAKRRKMKIKEAFKLLIEEEAAKLVNQEDLKEQAIELVEQHGIVFLDEIDKICKRGETSGPDVSREGVQRDLLPLVEGCTVTTKHGMVKTDHILFIASGAFQMAKPSDLIPELQGRLPIRVELDALSADDFKRILTEPHASLTEQYIALMATEGVTIEFAESGIESIAKAAWQVNERTENIGARRLHTVMEKLMEDISYEASDKSGSSFVIDADYVSAHLDNLVQDEDLSRFIL</sequence>
<feature type="chain" id="PRO_1000012807" description="ATP-dependent protease ATPase subunit HslU">
    <location>
        <begin position="1"/>
        <end position="442"/>
    </location>
</feature>
<feature type="region of interest" description="Disordered" evidence="2">
    <location>
        <begin position="133"/>
        <end position="156"/>
    </location>
</feature>
<feature type="binding site" evidence="1">
    <location>
        <position position="18"/>
    </location>
    <ligand>
        <name>ATP</name>
        <dbReference type="ChEBI" id="CHEBI:30616"/>
    </ligand>
</feature>
<feature type="binding site" evidence="1">
    <location>
        <begin position="60"/>
        <end position="65"/>
    </location>
    <ligand>
        <name>ATP</name>
        <dbReference type="ChEBI" id="CHEBI:30616"/>
    </ligand>
</feature>
<feature type="binding site" evidence="1">
    <location>
        <position position="255"/>
    </location>
    <ligand>
        <name>ATP</name>
        <dbReference type="ChEBI" id="CHEBI:30616"/>
    </ligand>
</feature>
<feature type="binding site" evidence="1">
    <location>
        <position position="320"/>
    </location>
    <ligand>
        <name>ATP</name>
        <dbReference type="ChEBI" id="CHEBI:30616"/>
    </ligand>
</feature>
<feature type="binding site" evidence="1">
    <location>
        <position position="392"/>
    </location>
    <ligand>
        <name>ATP</name>
        <dbReference type="ChEBI" id="CHEBI:30616"/>
    </ligand>
</feature>
<accession>Q0HED0</accession>